<sequence>MSTGDFLTKGIELVQKAIDLDTATQYEEAYTAYYNGLDYLMLALKYEKNPKSKDLIRAKFTEYLNRAEQLKKHLESEEANAAKKSPSAGSGSNGGNKKISQEEGEDNGGEDNKKLRGALSSAILSEKPNVKWEDVAGLEGAKEALKEAVILPVKFPHLFKGNRKPTSGILLYGPPGTGKSYLAKAVATEANSTFFSVSSSDLVSKWMGESEKLVKQLFAMARENKPSIIFIDEVDALTGTRGEGESEASRRIKTELLVQMNGVGNDSQGVLVLGATNIPWQLDSAIRRRFERRIYIPLPDLAARTTMFEINVGDTPCVLTKEDYRTLGAMTEGYSGSDIAVVVKDALMQPIRKIQSATHFKDVSTEDDETRKLTPCSPGDDGAIEMSWTDIEADELKEPDLTIKDFLKAIKSTRPTVNEDDLLKQEQFTRDFGQEGN</sequence>
<comment type="function">
    <text evidence="4 17 18">Involved in the transport of biosynthetic membrane proteins from the prevacuolar/endosomal compartment to the vacuole. Required for multivesicular body (MVB) protein sorting. Catalyzes the ATP-dependent dissociation of class E VPS proteins from endosomal membranes, such as the disassembly of the ESCRT-III complex.</text>
</comment>
<comment type="subunit">
    <text evidence="5 7 8 9 10 11 13 14 16 18">Monomer or homodimer (in nucleotide-free form). Decamer, dodecamer or tetradecamer of two stacked respective homooligomeric rings (when bound to ATP); the dodecameric form seems to be predominant. Interacts with VPS20. Interacts with VTA1; the interaction requires the dimeric structure of VTA1; 6 homodimers of VTA1 appear to associate with the dodecameric VSP4 complex. Interacts with DID2. Interacts with DID4. Interacts with IST1; IST1 competes with VTA1 for binding with VPS4.</text>
</comment>
<comment type="interaction">
    <interactant intactId="EBI-20475">
        <id>P52917</id>
    </interactant>
    <interactant intactId="EBI-2053489">
        <id>P69771</id>
        <label>DID2</label>
    </interactant>
    <organismsDiffer>false</organismsDiffer>
    <experiments>4</experiments>
</comment>
<comment type="interaction">
    <interactant intactId="EBI-20475">
        <id>P52917</id>
    </interactant>
    <interactant intactId="EBI-26574">
        <id>P36108</id>
        <label>DID4</label>
    </interactant>
    <organismsDiffer>false</organismsDiffer>
    <experiments>4</experiments>
</comment>
<comment type="interaction">
    <interactant intactId="EBI-20475">
        <id>P52917</id>
    </interactant>
    <interactant intactId="EBI-17554">
        <id>P39929</id>
        <label>SNF7</label>
    </interactant>
    <organismsDiffer>false</organismsDiffer>
    <experiments>3</experiments>
</comment>
<comment type="interaction">
    <interactant intactId="EBI-20475">
        <id>P52917</id>
    </interactant>
    <interactant intactId="EBI-28157">
        <id>Q04272</id>
        <label>VPS20</label>
    </interactant>
    <organismsDiffer>false</organismsDiffer>
    <experiments>6</experiments>
</comment>
<comment type="interaction">
    <interactant intactId="EBI-20475">
        <id>P52917</id>
    </interactant>
    <interactant intactId="EBI-20475">
        <id>P52917</id>
        <label>VPS4</label>
    </interactant>
    <organismsDiffer>false</organismsDiffer>
    <experiments>3</experiments>
</comment>
<comment type="interaction">
    <interactant intactId="EBI-20475">
        <id>P52917</id>
    </interactant>
    <interactant intactId="EBI-37098">
        <id>Q06263</id>
        <label>VTA1</label>
    </interactant>
    <organismsDiffer>false</organismsDiffer>
    <experiments>12</experiments>
</comment>
<comment type="subcellular location">
    <subcellularLocation>
        <location evidence="1">Endosome membrane</location>
        <topology evidence="1">Peripheral membrane protein</topology>
    </subcellularLocation>
</comment>
<comment type="miscellaneous">
    <text evidence="6">Present with 5350 molecules/cell in log phase SD medium.</text>
</comment>
<comment type="similarity">
    <text evidence="19">Belongs to the AAA ATPase family.</text>
</comment>
<feature type="chain" id="PRO_0000084760" description="Vacuolar protein sorting-associated protein 4">
    <location>
        <begin position="1"/>
        <end position="437"/>
    </location>
</feature>
<feature type="domain" description="MIT">
    <location>
        <begin position="3"/>
        <end position="80"/>
    </location>
</feature>
<feature type="region of interest" description="Disordered" evidence="3">
    <location>
        <begin position="74"/>
        <end position="114"/>
    </location>
</feature>
<feature type="region of interest" description="Disordered" evidence="3">
    <location>
        <begin position="364"/>
        <end position="384"/>
    </location>
</feature>
<feature type="region of interest" description="Disordered" evidence="3">
    <location>
        <begin position="418"/>
        <end position="437"/>
    </location>
</feature>
<feature type="compositionally biased region" description="Low complexity" evidence="3">
    <location>
        <begin position="82"/>
        <end position="98"/>
    </location>
</feature>
<feature type="compositionally biased region" description="Basic and acidic residues" evidence="3">
    <location>
        <begin position="421"/>
        <end position="437"/>
    </location>
</feature>
<feature type="binding site" evidence="2">
    <location>
        <begin position="173"/>
        <end position="180"/>
    </location>
    <ligand>
        <name>ATP</name>
        <dbReference type="ChEBI" id="CHEBI:30616"/>
    </ligand>
</feature>
<feature type="mutagenesis site" description="Inhibits membrane protein sorting to the vacuole." evidence="12">
    <original>L</original>
    <variation>D</variation>
    <location>
        <position position="64"/>
    </location>
</feature>
<feature type="mutagenesis site" description="No ATP hydrolysis. Missorting of vacuolar proteins." evidence="17">
    <original>K</original>
    <variation>A</variation>
    <location>
        <position position="179"/>
    </location>
</feature>
<feature type="mutagenesis site" description="Abolishes oligomerization." evidence="15">
    <original>Q</original>
    <variation>A</variation>
    <location>
        <position position="216"/>
    </location>
</feature>
<feature type="mutagenesis site" description="Defective in ATP hydrolysis. Missorting of vacuolar proteins." evidence="17">
    <original>E</original>
    <variation>Q</variation>
    <location>
        <position position="233"/>
    </location>
</feature>
<feature type="sequence conflict" description="In Ref. 1; CAA63364." evidence="19" ref="1">
    <original>A</original>
    <variation>S</variation>
    <location>
        <position position="32"/>
    </location>
</feature>
<feature type="helix" evidence="25">
    <location>
        <begin position="3"/>
        <end position="22"/>
    </location>
</feature>
<feature type="helix" evidence="25">
    <location>
        <begin position="26"/>
        <end position="46"/>
    </location>
</feature>
<feature type="helix" evidence="25">
    <location>
        <begin position="50"/>
        <end position="81"/>
    </location>
</feature>
<feature type="turn" evidence="26">
    <location>
        <begin position="117"/>
        <end position="121"/>
    </location>
</feature>
<feature type="strand" evidence="22">
    <location>
        <begin position="123"/>
        <end position="126"/>
    </location>
</feature>
<feature type="helix" evidence="22">
    <location>
        <begin position="132"/>
        <end position="134"/>
    </location>
</feature>
<feature type="helix" evidence="22">
    <location>
        <begin position="139"/>
        <end position="148"/>
    </location>
</feature>
<feature type="helix" evidence="22">
    <location>
        <begin position="150"/>
        <end position="154"/>
    </location>
</feature>
<feature type="helix" evidence="22">
    <location>
        <begin position="156"/>
        <end position="158"/>
    </location>
</feature>
<feature type="strand" evidence="22">
    <location>
        <begin position="168"/>
        <end position="172"/>
    </location>
</feature>
<feature type="strand" evidence="22">
    <location>
        <begin position="174"/>
        <end position="177"/>
    </location>
</feature>
<feature type="helix" evidence="22">
    <location>
        <begin position="179"/>
        <end position="190"/>
    </location>
</feature>
<feature type="strand" evidence="22">
    <location>
        <begin position="193"/>
        <end position="198"/>
    </location>
</feature>
<feature type="helix" evidence="22">
    <location>
        <begin position="199"/>
        <end position="203"/>
    </location>
</feature>
<feature type="turn" evidence="22">
    <location>
        <begin position="204"/>
        <end position="206"/>
    </location>
</feature>
<feature type="helix" evidence="22">
    <location>
        <begin position="207"/>
        <end position="209"/>
    </location>
</feature>
<feature type="helix" evidence="22">
    <location>
        <begin position="210"/>
        <end position="223"/>
    </location>
</feature>
<feature type="strand" evidence="22">
    <location>
        <begin position="225"/>
        <end position="232"/>
    </location>
</feature>
<feature type="helix" evidence="22">
    <location>
        <begin position="234"/>
        <end position="237"/>
    </location>
</feature>
<feature type="strand" evidence="26">
    <location>
        <begin position="241"/>
        <end position="244"/>
    </location>
</feature>
<feature type="helix" evidence="22">
    <location>
        <begin position="250"/>
        <end position="260"/>
    </location>
</feature>
<feature type="helix" evidence="22">
    <location>
        <begin position="261"/>
        <end position="264"/>
    </location>
</feature>
<feature type="strand" evidence="26">
    <location>
        <begin position="267"/>
        <end position="269"/>
    </location>
</feature>
<feature type="strand" evidence="22">
    <location>
        <begin position="270"/>
        <end position="277"/>
    </location>
</feature>
<feature type="helix" evidence="22">
    <location>
        <begin position="279"/>
        <end position="281"/>
    </location>
</feature>
<feature type="helix" evidence="22">
    <location>
        <begin position="284"/>
        <end position="289"/>
    </location>
</feature>
<feature type="strand" evidence="22">
    <location>
        <begin position="292"/>
        <end position="295"/>
    </location>
</feature>
<feature type="helix" evidence="22">
    <location>
        <begin position="301"/>
        <end position="312"/>
    </location>
</feature>
<feature type="strand" evidence="21">
    <location>
        <begin position="313"/>
        <end position="315"/>
    </location>
</feature>
<feature type="helix" evidence="22">
    <location>
        <begin position="321"/>
        <end position="329"/>
    </location>
</feature>
<feature type="turn" evidence="22">
    <location>
        <begin position="330"/>
        <end position="333"/>
    </location>
</feature>
<feature type="helix" evidence="22">
    <location>
        <begin position="336"/>
        <end position="346"/>
    </location>
</feature>
<feature type="helix" evidence="22">
    <location>
        <begin position="349"/>
        <end position="356"/>
    </location>
</feature>
<feature type="strand" evidence="22">
    <location>
        <begin position="358"/>
        <end position="362"/>
    </location>
</feature>
<feature type="strand" evidence="22">
    <location>
        <begin position="373"/>
        <end position="375"/>
    </location>
</feature>
<feature type="strand" evidence="24">
    <location>
        <begin position="378"/>
        <end position="380"/>
    </location>
</feature>
<feature type="strand" evidence="22">
    <location>
        <begin position="383"/>
        <end position="387"/>
    </location>
</feature>
<feature type="helix" evidence="22">
    <location>
        <begin position="388"/>
        <end position="390"/>
    </location>
</feature>
<feature type="helix" evidence="20">
    <location>
        <begin position="393"/>
        <end position="395"/>
    </location>
</feature>
<feature type="helix" evidence="22">
    <location>
        <begin position="403"/>
        <end position="412"/>
    </location>
</feature>
<feature type="helix" evidence="22">
    <location>
        <begin position="421"/>
        <end position="432"/>
    </location>
</feature>
<feature type="strand" evidence="23">
    <location>
        <begin position="433"/>
        <end position="435"/>
    </location>
</feature>
<protein>
    <recommendedName>
        <fullName>Vacuolar protein sorting-associated protein 4</fullName>
    </recommendedName>
    <alternativeName>
        <fullName>DOA4-independent degradation protein 6</fullName>
    </alternativeName>
    <alternativeName>
        <fullName>Protein END13</fullName>
    </alternativeName>
    <alternativeName>
        <fullName>Vacuolar protein-targeting protein 10</fullName>
    </alternativeName>
</protein>
<reference key="1">
    <citation type="journal article" date="2001" name="J. Cell Sci.">
        <title>End13p/Vps4p is required for efficient transport from early to late endosomes in Saccharomyces cerevisiae.</title>
        <authorList>
            <person name="Zahn R."/>
            <person name="Stevenson B.J."/>
            <person name="Schroeder-Koehne S."/>
            <person name="Zanolari B."/>
            <person name="Riezman H."/>
            <person name="Munn A.L."/>
        </authorList>
    </citation>
    <scope>NUCLEOTIDE SEQUENCE [GENOMIC DNA]</scope>
    <scope>FUNCTION</scope>
    <source>
        <strain>ATCC 200060 / W303</strain>
    </source>
</reference>
<reference key="2">
    <citation type="journal article" date="1997" name="EMBO J.">
        <title>Endosomal transport function in yeast requires a novel AAA-type ATPase, Vps4p.</title>
        <authorList>
            <person name="Babst M."/>
            <person name="Sato T.K."/>
            <person name="Banta L.M."/>
            <person name="Emr S.D."/>
        </authorList>
    </citation>
    <scope>NUCLEOTIDE SEQUENCE [GENOMIC DNA]</scope>
    <scope>FUNCTION</scope>
    <scope>MUTAGENESIS OF LYS-179 AND GLU-233</scope>
</reference>
<reference key="3">
    <citation type="journal article" date="1997" name="Nature">
        <title>The nucleotide sequence of Saccharomyces cerevisiae chromosome XVI.</title>
        <authorList>
            <person name="Bussey H."/>
            <person name="Storms R.K."/>
            <person name="Ahmed A."/>
            <person name="Albermann K."/>
            <person name="Allen E."/>
            <person name="Ansorge W."/>
            <person name="Araujo R."/>
            <person name="Aparicio A."/>
            <person name="Barrell B.G."/>
            <person name="Badcock K."/>
            <person name="Benes V."/>
            <person name="Botstein D."/>
            <person name="Bowman S."/>
            <person name="Brueckner M."/>
            <person name="Carpenter J."/>
            <person name="Cherry J.M."/>
            <person name="Chung E."/>
            <person name="Churcher C.M."/>
            <person name="Coster F."/>
            <person name="Davis K."/>
            <person name="Davis R.W."/>
            <person name="Dietrich F.S."/>
            <person name="Delius H."/>
            <person name="DiPaolo T."/>
            <person name="Dubois E."/>
            <person name="Duesterhoeft A."/>
            <person name="Duncan M."/>
            <person name="Floeth M."/>
            <person name="Fortin N."/>
            <person name="Friesen J.D."/>
            <person name="Fritz C."/>
            <person name="Goffeau A."/>
            <person name="Hall J."/>
            <person name="Hebling U."/>
            <person name="Heumann K."/>
            <person name="Hilbert H."/>
            <person name="Hillier L.W."/>
            <person name="Hunicke-Smith S."/>
            <person name="Hyman R.W."/>
            <person name="Johnston M."/>
            <person name="Kalman S."/>
            <person name="Kleine K."/>
            <person name="Komp C."/>
            <person name="Kurdi O."/>
            <person name="Lashkari D."/>
            <person name="Lew H."/>
            <person name="Lin A."/>
            <person name="Lin D."/>
            <person name="Louis E.J."/>
            <person name="Marathe R."/>
            <person name="Messenguy F."/>
            <person name="Mewes H.-W."/>
            <person name="Mirtipati S."/>
            <person name="Moestl D."/>
            <person name="Mueller-Auer S."/>
            <person name="Namath A."/>
            <person name="Nentwich U."/>
            <person name="Oefner P."/>
            <person name="Pearson D."/>
            <person name="Petel F.X."/>
            <person name="Pohl T.M."/>
            <person name="Purnelle B."/>
            <person name="Rajandream M.A."/>
            <person name="Rechmann S."/>
            <person name="Rieger M."/>
            <person name="Riles L."/>
            <person name="Roberts D."/>
            <person name="Schaefer M."/>
            <person name="Scharfe M."/>
            <person name="Scherens B."/>
            <person name="Schramm S."/>
            <person name="Schroeder M."/>
            <person name="Sdicu A.-M."/>
            <person name="Tettelin H."/>
            <person name="Urrestarazu L.A."/>
            <person name="Ushinsky S."/>
            <person name="Vierendeels F."/>
            <person name="Vissers S."/>
            <person name="Voss H."/>
            <person name="Walsh S.V."/>
            <person name="Wambutt R."/>
            <person name="Wang Y."/>
            <person name="Wedler E."/>
            <person name="Wedler H."/>
            <person name="Winnett E."/>
            <person name="Zhong W.-W."/>
            <person name="Zollner A."/>
            <person name="Vo D.H."/>
            <person name="Hani J."/>
        </authorList>
    </citation>
    <scope>NUCLEOTIDE SEQUENCE [LARGE SCALE GENOMIC DNA]</scope>
    <source>
        <strain>ATCC 204508 / S288c</strain>
    </source>
</reference>
<reference key="4">
    <citation type="journal article" date="2014" name="G3 (Bethesda)">
        <title>The reference genome sequence of Saccharomyces cerevisiae: Then and now.</title>
        <authorList>
            <person name="Engel S.R."/>
            <person name="Dietrich F.S."/>
            <person name="Fisk D.G."/>
            <person name="Binkley G."/>
            <person name="Balakrishnan R."/>
            <person name="Costanzo M.C."/>
            <person name="Dwight S.S."/>
            <person name="Hitz B.C."/>
            <person name="Karra K."/>
            <person name="Nash R.S."/>
            <person name="Weng S."/>
            <person name="Wong E.D."/>
            <person name="Lloyd P."/>
            <person name="Skrzypek M.S."/>
            <person name="Miyasato S.R."/>
            <person name="Simison M."/>
            <person name="Cherry J.M."/>
        </authorList>
    </citation>
    <scope>GENOME REANNOTATION</scope>
    <source>
        <strain>ATCC 204508 / S288c</strain>
    </source>
</reference>
<reference key="5">
    <citation type="journal article" date="1998" name="EMBO J.">
        <title>The Vps4p AAA ATPase regulates membrane association of a Vps protein complex required for normal endosome function.</title>
        <authorList>
            <person name="Babst M."/>
            <person name="Wendland B."/>
            <person name="Estepa E.J."/>
            <person name="Emr S.D."/>
        </authorList>
    </citation>
    <scope>FUNCTION</scope>
    <scope>SUBUNIT</scope>
</reference>
<reference key="6">
    <citation type="journal article" date="2003" name="J. Cell Sci.">
        <title>Vps20p and Vta1p interact with Vps4p and function in multivesicular body sorting and endosomal transport in Saccharomyces cerevisiae.</title>
        <authorList>
            <person name="Yeo S.C.L."/>
            <person name="Xu L."/>
            <person name="Ren J."/>
            <person name="Boulton V.J."/>
            <person name="Wagle M.D."/>
            <person name="Liu C."/>
            <person name="Ren G."/>
            <person name="Wong P."/>
            <person name="Zahn R."/>
            <person name="Sasajala P."/>
            <person name="Yang H."/>
            <person name="Piper R.C."/>
            <person name="Munn A.L."/>
        </authorList>
    </citation>
    <scope>INTERACTION WITH VPS20 AND VTA1</scope>
</reference>
<reference key="7">
    <citation type="journal article" date="2003" name="Nature">
        <title>Global analysis of protein expression in yeast.</title>
        <authorList>
            <person name="Ghaemmaghami S."/>
            <person name="Huh W.-K."/>
            <person name="Bower K."/>
            <person name="Howson R.W."/>
            <person name="Belle A."/>
            <person name="Dephoure N."/>
            <person name="O'Shea E.K."/>
            <person name="Weissman J.S."/>
        </authorList>
    </citation>
    <scope>LEVEL OF PROTEIN EXPRESSION [LARGE SCALE ANALYSIS]</scope>
</reference>
<reference key="8">
    <citation type="journal article" date="2004" name="Traffic">
        <title>Protein-protein interactions of ESCRT complexes in the yeast Saccharomyces cerevisiae.</title>
        <authorList>
            <person name="Bowers K."/>
            <person name="Lottridge J."/>
            <person name="Helliwell S.B."/>
            <person name="Goldthwaite L.M."/>
            <person name="Luzio J.P."/>
            <person name="Stevens T.H."/>
        </authorList>
    </citation>
    <scope>INTERACTION WITH DID2</scope>
</reference>
<reference key="9">
    <citation type="journal article" date="2006" name="J. Cell Biol.">
        <title>Recycling of ESCRTs by the AAA-ATPase Vps4 is regulated by a conserved VSL region in Vta1.</title>
        <authorList>
            <person name="Azmi I."/>
            <person name="Davies B."/>
            <person name="Dimaano C."/>
            <person name="Payne J."/>
            <person name="Eckert D."/>
            <person name="Babst M."/>
            <person name="Katzmann D.J."/>
        </authorList>
    </citation>
    <scope>INTERACTION WITH VTA1</scope>
    <scope>OLIGOMERIZATION</scope>
</reference>
<reference key="10">
    <citation type="journal article" date="2006" name="J. Cell Biol.">
        <title>Did2 coordinates Vps4-mediated dissociation of ESCRT-III from endosomes.</title>
        <authorList>
            <person name="Nickerson D.P."/>
            <person name="West M."/>
            <person name="Odorizzi G."/>
        </authorList>
    </citation>
    <scope>INTERACTION WITH DID2</scope>
</reference>
<reference key="11">
    <citation type="journal article" date="2006" name="J. Cell Biol.">
        <authorList>
            <person name="Nickerson D.P."/>
            <person name="West M."/>
            <person name="Odorizzi G."/>
        </authorList>
    </citation>
    <scope>ERRATUM OF PUBMED:17130288</scope>
</reference>
<reference key="12">
    <citation type="journal article" date="2006" name="Proc. Natl. Acad. Sci. U.S.A.">
        <title>Vta1p and Vps46p regulate the membrane association and ATPase activity of Vps4p at the yeast multivesicular body.</title>
        <authorList>
            <person name="Lottridge J.M."/>
            <person name="Flannery A.R."/>
            <person name="Vincelli J.L."/>
            <person name="Stevens T.H."/>
        </authorList>
    </citation>
    <scope>INTERACTION WITH DID2</scope>
</reference>
<reference key="13">
    <citation type="journal article" date="2007" name="J. Proteome Res.">
        <title>Large-scale phosphorylation analysis of alpha-factor-arrested Saccharomyces cerevisiae.</title>
        <authorList>
            <person name="Li X."/>
            <person name="Gerber S.A."/>
            <person name="Rudner A.D."/>
            <person name="Beausoleil S.A."/>
            <person name="Haas W."/>
            <person name="Villen J."/>
            <person name="Elias J.E."/>
            <person name="Gygi S.P."/>
        </authorList>
    </citation>
    <scope>IDENTIFICATION BY MASS SPECTROMETRY [LARGE SCALE ANALYSIS]</scope>
    <source>
        <strain>ADR376</strain>
    </source>
</reference>
<reference key="14">
    <citation type="journal article" date="2007" name="Nature">
        <title>ESCRT-III recognition by VPS4 ATPases.</title>
        <authorList>
            <person name="Stuchell-Brereton M.D."/>
            <person name="Skalicky J.J."/>
            <person name="Kieffer C."/>
            <person name="Karren M.A."/>
            <person name="Ghaffarian S."/>
            <person name="Sundquist W.I."/>
        </authorList>
    </citation>
    <scope>MUTAGENESIS OF LEU-64</scope>
</reference>
<reference key="15">
    <citation type="journal article" date="2008" name="J. Mol. Biol.">
        <title>Cryo-EM structure of dodecameric Vps4p and its 2:1 complex with Vta1p.</title>
        <authorList>
            <person name="Yu Z."/>
            <person name="Gonciarz M.D."/>
            <person name="Sundquist W.I."/>
            <person name="Hill C.P."/>
            <person name="Jensen G.J."/>
        </authorList>
    </citation>
    <scope>INTERACTION WITH VTA1</scope>
    <scope>SUBUNIT</scope>
</reference>
<reference key="16">
    <citation type="journal article" date="2008" name="Mol. Biol. Cell">
        <title>Novel Ist1-Did2 complex functions at a late step in multivesicular body sorting.</title>
        <authorList>
            <person name="Rue S.M."/>
            <person name="Mattei S."/>
            <person name="Saksena S."/>
            <person name="Emr S.D."/>
        </authorList>
    </citation>
    <scope>INTERACTION WITH IST1</scope>
</reference>
<reference key="17">
    <citation type="journal article" date="2007" name="J. Mol. Biol.">
        <title>Structural characterization of the ATPase reaction cycle of endosomal AAA protein Vps4.</title>
        <authorList>
            <person name="Xiao J."/>
            <person name="Xia H."/>
            <person name="Yoshino-Koh K."/>
            <person name="Zhou J."/>
            <person name="Xu Z."/>
        </authorList>
    </citation>
    <scope>X-RAY CRYSTALLOGRAPHY (2.9 ANGSTROMS) OF 83-437</scope>
    <scope>OLIGOMERIZATION</scope>
    <scope>INTERACTION WITH VPS20 AND DID4</scope>
</reference>
<reference key="18">
    <citation type="journal article" date="2007" name="Nature">
        <title>Structural basis for selective recognition of ESCRT-III by the AAA ATPase Vps4.</title>
        <authorList>
            <person name="Obita T."/>
            <person name="Saksena S."/>
            <person name="Ghazi-Tabatabai S."/>
            <person name="Gill D.J."/>
            <person name="Perisic O."/>
            <person name="Emr S.D."/>
            <person name="Williams R.L."/>
        </authorList>
    </citation>
    <scope>X-RAY CRYSTALLOGRAPHY (1.98 ANGSTROMS) OF 1-82 IN COMPLEX WITH DID4</scope>
    <scope>INTERACTION WITH DID2</scope>
</reference>
<reference key="19">
    <citation type="journal article" date="2008" name="J. Mol. Biol.">
        <title>Vacuolar protein sorting: two different functional states of the AAA-ATPase Vps4p.</title>
        <authorList>
            <person name="Hartmann C."/>
            <person name="Chami M."/>
            <person name="Zachariae U."/>
            <person name="de Groot B.L."/>
            <person name="Engel A."/>
            <person name="Grutter M.G."/>
        </authorList>
    </citation>
    <scope>X-RAY CRYSTALLOGRAPHY (3.35 ANGSTROMS) OF 116-437</scope>
    <scope>OLIGOMERIZATION</scope>
    <scope>MUTAGENESIS OF GLN-216</scope>
</reference>
<organism>
    <name type="scientific">Saccharomyces cerevisiae (strain ATCC 204508 / S288c)</name>
    <name type="common">Baker's yeast</name>
    <dbReference type="NCBI Taxonomy" id="559292"/>
    <lineage>
        <taxon>Eukaryota</taxon>
        <taxon>Fungi</taxon>
        <taxon>Dikarya</taxon>
        <taxon>Ascomycota</taxon>
        <taxon>Saccharomycotina</taxon>
        <taxon>Saccharomycetes</taxon>
        <taxon>Saccharomycetales</taxon>
        <taxon>Saccharomycetaceae</taxon>
        <taxon>Saccharomyces</taxon>
    </lineage>
</organism>
<proteinExistence type="evidence at protein level"/>
<gene>
    <name type="primary">VPS4</name>
    <name type="synonym">CSC1</name>
    <name type="synonym">DID6</name>
    <name type="synonym">END13</name>
    <name type="synonym">GRD13</name>
    <name type="synonym">VPL4</name>
    <name type="synonym">VPT10</name>
    <name type="ordered locus">YPR173C</name>
    <name type="ORF">P9705.10</name>
</gene>
<name>VPS4_YEAST</name>
<accession>P52917</accession>
<accession>D6W4H4</accession>
<evidence type="ECO:0000250" key="1"/>
<evidence type="ECO:0000255" key="2"/>
<evidence type="ECO:0000256" key="3">
    <source>
        <dbReference type="SAM" id="MobiDB-lite"/>
    </source>
</evidence>
<evidence type="ECO:0000269" key="4">
    <source>
    </source>
</evidence>
<evidence type="ECO:0000269" key="5">
    <source>
    </source>
</evidence>
<evidence type="ECO:0000269" key="6">
    <source>
    </source>
</evidence>
<evidence type="ECO:0000269" key="7">
    <source>
    </source>
</evidence>
<evidence type="ECO:0000269" key="8">
    <source>
    </source>
</evidence>
<evidence type="ECO:0000269" key="9">
    <source>
    </source>
</evidence>
<evidence type="ECO:0000269" key="10">
    <source>
    </source>
</evidence>
<evidence type="ECO:0000269" key="11">
    <source>
    </source>
</evidence>
<evidence type="ECO:0000269" key="12">
    <source>
    </source>
</evidence>
<evidence type="ECO:0000269" key="13">
    <source>
    </source>
</evidence>
<evidence type="ECO:0000269" key="14">
    <source>
    </source>
</evidence>
<evidence type="ECO:0000269" key="15">
    <source>
    </source>
</evidence>
<evidence type="ECO:0000269" key="16">
    <source>
    </source>
</evidence>
<evidence type="ECO:0000269" key="17">
    <source>
    </source>
</evidence>
<evidence type="ECO:0000269" key="18">
    <source>
    </source>
</evidence>
<evidence type="ECO:0000305" key="19"/>
<evidence type="ECO:0007829" key="20">
    <source>
        <dbReference type="PDB" id="2QP9"/>
    </source>
</evidence>
<evidence type="ECO:0007829" key="21">
    <source>
        <dbReference type="PDB" id="2RKO"/>
    </source>
</evidence>
<evidence type="ECO:0007829" key="22">
    <source>
        <dbReference type="PDB" id="3EIE"/>
    </source>
</evidence>
<evidence type="ECO:0007829" key="23">
    <source>
        <dbReference type="PDB" id="3EIH"/>
    </source>
</evidence>
<evidence type="ECO:0007829" key="24">
    <source>
        <dbReference type="PDB" id="3MHV"/>
    </source>
</evidence>
<evidence type="ECO:0007829" key="25">
    <source>
        <dbReference type="PDB" id="5FVK"/>
    </source>
</evidence>
<evidence type="ECO:0007829" key="26">
    <source>
        <dbReference type="PDB" id="6AP1"/>
    </source>
</evidence>
<dbReference type="EMBL" id="X92680">
    <property type="protein sequence ID" value="CAA63364.1"/>
    <property type="molecule type" value="Genomic_DNA"/>
</dbReference>
<dbReference type="EMBL" id="U25842">
    <property type="protein sequence ID" value="AAB68107.1"/>
    <property type="molecule type" value="Genomic_DNA"/>
</dbReference>
<dbReference type="EMBL" id="BK006949">
    <property type="protein sequence ID" value="DAA11590.1"/>
    <property type="molecule type" value="Genomic_DNA"/>
</dbReference>
<dbReference type="PIR" id="S59831">
    <property type="entry name" value="S59831"/>
</dbReference>
<dbReference type="RefSeq" id="NP_015499.1">
    <property type="nucleotide sequence ID" value="NM_001184270.1"/>
</dbReference>
<dbReference type="PDB" id="2QP9">
    <property type="method" value="X-ray"/>
    <property type="resolution" value="2.90 A"/>
    <property type="chains" value="X=83-437"/>
</dbReference>
<dbReference type="PDB" id="2QPA">
    <property type="method" value="X-ray"/>
    <property type="resolution" value="3.20 A"/>
    <property type="chains" value="A/B/C=83-437"/>
</dbReference>
<dbReference type="PDB" id="2RKO">
    <property type="method" value="X-ray"/>
    <property type="resolution" value="3.35 A"/>
    <property type="chains" value="A=124-437"/>
</dbReference>
<dbReference type="PDB" id="2V6X">
    <property type="method" value="X-ray"/>
    <property type="resolution" value="1.98 A"/>
    <property type="chains" value="A=1-82"/>
</dbReference>
<dbReference type="PDB" id="3EIE">
    <property type="method" value="X-ray"/>
    <property type="resolution" value="2.70 A"/>
    <property type="chains" value="A=122-437"/>
</dbReference>
<dbReference type="PDB" id="3EIH">
    <property type="method" value="X-ray"/>
    <property type="resolution" value="3.25 A"/>
    <property type="chains" value="A/B/C=104-437"/>
</dbReference>
<dbReference type="PDB" id="3MHV">
    <property type="method" value="X-ray"/>
    <property type="resolution" value="3.10 A"/>
    <property type="chains" value="C=299-413"/>
</dbReference>
<dbReference type="PDB" id="4NIQ">
    <property type="method" value="X-ray"/>
    <property type="resolution" value="2.30 A"/>
    <property type="chains" value="A/B=1-82"/>
</dbReference>
<dbReference type="PDB" id="5FVK">
    <property type="method" value="X-ray"/>
    <property type="resolution" value="1.66 A"/>
    <property type="chains" value="A/B=1-82"/>
</dbReference>
<dbReference type="PDB" id="5FVL">
    <property type="method" value="X-ray"/>
    <property type="resolution" value="1.97 A"/>
    <property type="chains" value="A/B=1-82"/>
</dbReference>
<dbReference type="PDB" id="5UIE">
    <property type="method" value="EM"/>
    <property type="resolution" value="5.70 A"/>
    <property type="chains" value="A/B/C/D/E/F=1-437"/>
</dbReference>
<dbReference type="PDB" id="5XMI">
    <property type="method" value="EM"/>
    <property type="resolution" value="3.90 A"/>
    <property type="chains" value="A/B/C/D/E/F=1-437"/>
</dbReference>
<dbReference type="PDB" id="5XMK">
    <property type="method" value="EM"/>
    <property type="resolution" value="4.18 A"/>
    <property type="chains" value="A/B/C/D/E/F=1-437"/>
</dbReference>
<dbReference type="PDB" id="6AP1">
    <property type="method" value="EM"/>
    <property type="resolution" value="3.20 A"/>
    <property type="chains" value="A/B/C/D/E/F=101-437"/>
</dbReference>
<dbReference type="PDB" id="6BMF">
    <property type="method" value="EM"/>
    <property type="resolution" value="3.20 A"/>
    <property type="chains" value="A/B/C/D/E=101-437"/>
</dbReference>
<dbReference type="PDB" id="6NDY">
    <property type="method" value="EM"/>
    <property type="resolution" value="3.60 A"/>
    <property type="chains" value="A/B/C/D/E=101-437"/>
</dbReference>
<dbReference type="PDB" id="6OO2">
    <property type="method" value="EM"/>
    <property type="resolution" value="4.40 A"/>
    <property type="chains" value="A/B/C/D/E/F=101-437"/>
</dbReference>
<dbReference type="PDB" id="9BL8">
    <property type="method" value="X-ray"/>
    <property type="resolution" value="1.30 A"/>
    <property type="chains" value="A=1-82"/>
</dbReference>
<dbReference type="PDBsum" id="2QP9"/>
<dbReference type="PDBsum" id="2QPA"/>
<dbReference type="PDBsum" id="2RKO"/>
<dbReference type="PDBsum" id="2V6X"/>
<dbReference type="PDBsum" id="3EIE"/>
<dbReference type="PDBsum" id="3EIH"/>
<dbReference type="PDBsum" id="3MHV"/>
<dbReference type="PDBsum" id="4NIQ"/>
<dbReference type="PDBsum" id="5FVK"/>
<dbReference type="PDBsum" id="5FVL"/>
<dbReference type="PDBsum" id="5UIE"/>
<dbReference type="PDBsum" id="5XMI"/>
<dbReference type="PDBsum" id="5XMK"/>
<dbReference type="PDBsum" id="6AP1"/>
<dbReference type="PDBsum" id="6BMF"/>
<dbReference type="PDBsum" id="6NDY"/>
<dbReference type="PDBsum" id="6OO2"/>
<dbReference type="PDBsum" id="9BL8"/>
<dbReference type="EMDB" id="EMD-0443"/>
<dbReference type="EMDB" id="EMD-20142"/>
<dbReference type="EMDB" id="EMD-6733"/>
<dbReference type="EMDB" id="EMD-6734"/>
<dbReference type="EMDB" id="EMD-6735"/>
<dbReference type="EMDB" id="EMD-6736"/>
<dbReference type="EMDB" id="EMD-8549"/>
<dbReference type="SMR" id="P52917"/>
<dbReference type="BioGRID" id="36346">
    <property type="interactions" value="681"/>
</dbReference>
<dbReference type="ComplexPortal" id="CPX-334">
    <property type="entry name" value="VPS4 complex"/>
</dbReference>
<dbReference type="DIP" id="DIP-1746N"/>
<dbReference type="FunCoup" id="P52917">
    <property type="interactions" value="1172"/>
</dbReference>
<dbReference type="IntAct" id="P52917">
    <property type="interactions" value="22"/>
</dbReference>
<dbReference type="MINT" id="P52917"/>
<dbReference type="STRING" id="4932.YPR173C"/>
<dbReference type="TCDB" id="3.A.31.1.1">
    <property type="family name" value="the endosomal sorting complexes required for transport iii (escrt-iii) family"/>
</dbReference>
<dbReference type="iPTMnet" id="P52917"/>
<dbReference type="PaxDb" id="4932-YPR173C"/>
<dbReference type="PeptideAtlas" id="P52917"/>
<dbReference type="DNASU" id="856303"/>
<dbReference type="EnsemblFungi" id="YPR173C_mRNA">
    <property type="protein sequence ID" value="YPR173C"/>
    <property type="gene ID" value="YPR173C"/>
</dbReference>
<dbReference type="GeneID" id="856303"/>
<dbReference type="KEGG" id="sce:YPR173C"/>
<dbReference type="AGR" id="SGD:S000006377"/>
<dbReference type="SGD" id="S000006377">
    <property type="gene designation" value="VPS4"/>
</dbReference>
<dbReference type="VEuPathDB" id="FungiDB:YPR173C"/>
<dbReference type="eggNOG" id="KOG0739">
    <property type="taxonomic scope" value="Eukaryota"/>
</dbReference>
<dbReference type="GeneTree" id="ENSGT00940000154973"/>
<dbReference type="HOGENOM" id="CLU_000688_21_2_1"/>
<dbReference type="InParanoid" id="P52917"/>
<dbReference type="OMA" id="IEWTNEF"/>
<dbReference type="OrthoDB" id="29072at2759"/>
<dbReference type="BioCyc" id="YEAST:G3O-34300-MONOMER"/>
<dbReference type="BRENDA" id="3.6.4.6">
    <property type="organism ID" value="984"/>
</dbReference>
<dbReference type="Reactome" id="R-SCE-917729">
    <property type="pathway name" value="Endosomal Sorting Complex Required For Transport (ESCRT)"/>
</dbReference>
<dbReference type="Reactome" id="R-SCE-9668328">
    <property type="pathway name" value="Sealing of the nuclear envelope (NE) by ESCRT-III"/>
</dbReference>
<dbReference type="BioGRID-ORCS" id="856303">
    <property type="hits" value="5 hits in 10 CRISPR screens"/>
</dbReference>
<dbReference type="EvolutionaryTrace" id="P52917"/>
<dbReference type="PRO" id="PR:P52917"/>
<dbReference type="Proteomes" id="UP000002311">
    <property type="component" value="Chromosome XVI"/>
</dbReference>
<dbReference type="RNAct" id="P52917">
    <property type="molecule type" value="protein"/>
</dbReference>
<dbReference type="GO" id="GO:1904949">
    <property type="term" value="C:ATPase complex"/>
    <property type="evidence" value="ECO:0000315"/>
    <property type="project" value="ComplexPortal"/>
</dbReference>
<dbReference type="GO" id="GO:0005737">
    <property type="term" value="C:cytoplasm"/>
    <property type="evidence" value="ECO:0007005"/>
    <property type="project" value="SGD"/>
</dbReference>
<dbReference type="GO" id="GO:0005783">
    <property type="term" value="C:endoplasmic reticulum"/>
    <property type="evidence" value="ECO:0007005"/>
    <property type="project" value="SGD"/>
</dbReference>
<dbReference type="GO" id="GO:0005768">
    <property type="term" value="C:endosome"/>
    <property type="evidence" value="ECO:0000314"/>
    <property type="project" value="SGD"/>
</dbReference>
<dbReference type="GO" id="GO:1990621">
    <property type="term" value="C:ESCRT IV complex"/>
    <property type="evidence" value="ECO:0000314"/>
    <property type="project" value="FlyBase"/>
</dbReference>
<dbReference type="GO" id="GO:0016020">
    <property type="term" value="C:membrane"/>
    <property type="evidence" value="ECO:0000314"/>
    <property type="project" value="SGD"/>
</dbReference>
<dbReference type="GO" id="GO:0030496">
    <property type="term" value="C:midbody"/>
    <property type="evidence" value="ECO:0000303"/>
    <property type="project" value="ComplexPortal"/>
</dbReference>
<dbReference type="GO" id="GO:0005643">
    <property type="term" value="C:nuclear pore"/>
    <property type="evidence" value="ECO:0000303"/>
    <property type="project" value="ComplexPortal"/>
</dbReference>
<dbReference type="GO" id="GO:0005886">
    <property type="term" value="C:plasma membrane"/>
    <property type="evidence" value="ECO:0000314"/>
    <property type="project" value="ComplexPortal"/>
</dbReference>
<dbReference type="GO" id="GO:0005524">
    <property type="term" value="F:ATP binding"/>
    <property type="evidence" value="ECO:0000314"/>
    <property type="project" value="SGD"/>
</dbReference>
<dbReference type="GO" id="GO:0016887">
    <property type="term" value="F:ATP hydrolysis activity"/>
    <property type="evidence" value="ECO:0000314"/>
    <property type="project" value="SGD"/>
</dbReference>
<dbReference type="GO" id="GO:0042802">
    <property type="term" value="F:identical protein binding"/>
    <property type="evidence" value="ECO:0000314"/>
    <property type="project" value="UniProtKB"/>
</dbReference>
<dbReference type="GO" id="GO:0042803">
    <property type="term" value="F:protein homodimerization activity"/>
    <property type="evidence" value="ECO:0000314"/>
    <property type="project" value="UniProtKB"/>
</dbReference>
<dbReference type="GO" id="GO:0097352">
    <property type="term" value="P:autophagosome maturation"/>
    <property type="evidence" value="ECO:0000315"/>
    <property type="project" value="ComplexPortal"/>
</dbReference>
<dbReference type="GO" id="GO:0006914">
    <property type="term" value="P:autophagy"/>
    <property type="evidence" value="ECO:0000315"/>
    <property type="project" value="ComplexPortal"/>
</dbReference>
<dbReference type="GO" id="GO:0016197">
    <property type="term" value="P:endosomal transport"/>
    <property type="evidence" value="ECO:0000318"/>
    <property type="project" value="GO_Central"/>
</dbReference>
<dbReference type="GO" id="GO:0070676">
    <property type="term" value="P:intralumenal vesicle formation"/>
    <property type="evidence" value="ECO:0000315"/>
    <property type="project" value="SGD"/>
</dbReference>
<dbReference type="GO" id="GO:0061764">
    <property type="term" value="P:late endosome to lysosome transport via multivesicular body sorting pathway"/>
    <property type="evidence" value="ECO:0000315"/>
    <property type="project" value="ComplexPortal"/>
</dbReference>
<dbReference type="GO" id="GO:0045324">
    <property type="term" value="P:late endosome to vacuole transport"/>
    <property type="evidence" value="ECO:0000315"/>
    <property type="project" value="SGD"/>
</dbReference>
<dbReference type="GO" id="GO:0032511">
    <property type="term" value="P:late endosome to vacuole transport via multivesicular body sorting pathway"/>
    <property type="evidence" value="ECO:0000315"/>
    <property type="project" value="SGD"/>
</dbReference>
<dbReference type="GO" id="GO:0016236">
    <property type="term" value="P:macroautophagy"/>
    <property type="evidence" value="ECO:0000315"/>
    <property type="project" value="SGD"/>
</dbReference>
<dbReference type="GO" id="GO:0090148">
    <property type="term" value="P:membrane fission"/>
    <property type="evidence" value="ECO:0000315"/>
    <property type="project" value="ComplexPortal"/>
</dbReference>
<dbReference type="GO" id="GO:0061952">
    <property type="term" value="P:midbody abscission"/>
    <property type="evidence" value="ECO:0000303"/>
    <property type="project" value="ComplexPortal"/>
</dbReference>
<dbReference type="GO" id="GO:0036258">
    <property type="term" value="P:multivesicular body assembly"/>
    <property type="evidence" value="ECO:0000315"/>
    <property type="project" value="ComplexPortal"/>
</dbReference>
<dbReference type="GO" id="GO:0071985">
    <property type="term" value="P:multivesicular body sorting pathway"/>
    <property type="evidence" value="ECO:0000315"/>
    <property type="project" value="ComplexPortal"/>
</dbReference>
<dbReference type="GO" id="GO:0031468">
    <property type="term" value="P:nuclear membrane reassembly"/>
    <property type="evidence" value="ECO:0000303"/>
    <property type="project" value="ComplexPortal"/>
</dbReference>
<dbReference type="GO" id="GO:0006997">
    <property type="term" value="P:nucleus organization"/>
    <property type="evidence" value="ECO:0000303"/>
    <property type="project" value="ComplexPortal"/>
</dbReference>
<dbReference type="GO" id="GO:0001778">
    <property type="term" value="P:plasma membrane repair"/>
    <property type="evidence" value="ECO:0000303"/>
    <property type="project" value="ComplexPortal"/>
</dbReference>
<dbReference type="GO" id="GO:0045053">
    <property type="term" value="P:protein retention in Golgi apparatus"/>
    <property type="evidence" value="ECO:0000315"/>
    <property type="project" value="SGD"/>
</dbReference>
<dbReference type="GO" id="GO:0015031">
    <property type="term" value="P:protein transport"/>
    <property type="evidence" value="ECO:0007669"/>
    <property type="project" value="UniProtKB-KW"/>
</dbReference>
<dbReference type="GO" id="GO:0061709">
    <property type="term" value="P:reticulophagy"/>
    <property type="evidence" value="ECO:0000314"/>
    <property type="project" value="SGD"/>
</dbReference>
<dbReference type="GO" id="GO:0016125">
    <property type="term" value="P:sterol metabolic process"/>
    <property type="evidence" value="ECO:0000315"/>
    <property type="project" value="SGD"/>
</dbReference>
<dbReference type="GO" id="GO:0007033">
    <property type="term" value="P:vacuole organization"/>
    <property type="evidence" value="ECO:0000318"/>
    <property type="project" value="GO_Central"/>
</dbReference>
<dbReference type="CDD" id="cd02678">
    <property type="entry name" value="MIT_VPS4"/>
    <property type="match status" value="1"/>
</dbReference>
<dbReference type="CDD" id="cd19521">
    <property type="entry name" value="RecA-like_VPS4"/>
    <property type="match status" value="1"/>
</dbReference>
<dbReference type="FunFam" id="3.40.50.300:FF:000043">
    <property type="entry name" value="Vacuolar protein sorting-associated protein 4"/>
    <property type="match status" value="1"/>
</dbReference>
<dbReference type="FunFam" id="1.10.8.60:FF:000015">
    <property type="entry name" value="vacuolar protein sorting-associated protein 4A"/>
    <property type="match status" value="1"/>
</dbReference>
<dbReference type="FunFam" id="1.20.58.80:FF:000014">
    <property type="entry name" value="Vacuolar protein-sorting-associated protein 4"/>
    <property type="match status" value="1"/>
</dbReference>
<dbReference type="Gene3D" id="1.10.8.60">
    <property type="match status" value="1"/>
</dbReference>
<dbReference type="Gene3D" id="3.40.50.300">
    <property type="entry name" value="P-loop containing nucleotide triphosphate hydrolases"/>
    <property type="match status" value="1"/>
</dbReference>
<dbReference type="Gene3D" id="1.20.58.80">
    <property type="entry name" value="Phosphotransferase system, lactose/cellobiose-type IIA subunit"/>
    <property type="match status" value="1"/>
</dbReference>
<dbReference type="InterPro" id="IPR003593">
    <property type="entry name" value="AAA+_ATPase"/>
</dbReference>
<dbReference type="InterPro" id="IPR041569">
    <property type="entry name" value="AAA_lid_3"/>
</dbReference>
<dbReference type="InterPro" id="IPR003959">
    <property type="entry name" value="ATPase_AAA_core"/>
</dbReference>
<dbReference type="InterPro" id="IPR003960">
    <property type="entry name" value="ATPase_AAA_CS"/>
</dbReference>
<dbReference type="InterPro" id="IPR007330">
    <property type="entry name" value="MIT_dom"/>
</dbReference>
<dbReference type="InterPro" id="IPR036181">
    <property type="entry name" value="MIT_dom_sf"/>
</dbReference>
<dbReference type="InterPro" id="IPR050304">
    <property type="entry name" value="MT-severing_AAA_ATPase"/>
</dbReference>
<dbReference type="InterPro" id="IPR027417">
    <property type="entry name" value="P-loop_NTPase"/>
</dbReference>
<dbReference type="InterPro" id="IPR015415">
    <property type="entry name" value="Spast_Vps4_C"/>
</dbReference>
<dbReference type="InterPro" id="IPR045253">
    <property type="entry name" value="VPS4_MIT"/>
</dbReference>
<dbReference type="PANTHER" id="PTHR23074">
    <property type="entry name" value="AAA DOMAIN-CONTAINING"/>
    <property type="match status" value="1"/>
</dbReference>
<dbReference type="PANTHER" id="PTHR23074:SF83">
    <property type="entry name" value="VACUOLAR PROTEIN SORTING-ASSOCIATED PROTEIN 4A"/>
    <property type="match status" value="1"/>
</dbReference>
<dbReference type="Pfam" id="PF00004">
    <property type="entry name" value="AAA"/>
    <property type="match status" value="1"/>
</dbReference>
<dbReference type="Pfam" id="PF17862">
    <property type="entry name" value="AAA_lid_3"/>
    <property type="match status" value="1"/>
</dbReference>
<dbReference type="Pfam" id="PF04212">
    <property type="entry name" value="MIT"/>
    <property type="match status" value="1"/>
</dbReference>
<dbReference type="Pfam" id="PF09336">
    <property type="entry name" value="Vps4_C"/>
    <property type="match status" value="1"/>
</dbReference>
<dbReference type="SMART" id="SM00382">
    <property type="entry name" value="AAA"/>
    <property type="match status" value="1"/>
</dbReference>
<dbReference type="SMART" id="SM00745">
    <property type="entry name" value="MIT"/>
    <property type="match status" value="1"/>
</dbReference>
<dbReference type="SUPFAM" id="SSF116846">
    <property type="entry name" value="MIT domain"/>
    <property type="match status" value="1"/>
</dbReference>
<dbReference type="SUPFAM" id="SSF52540">
    <property type="entry name" value="P-loop containing nucleoside triphosphate hydrolases"/>
    <property type="match status" value="1"/>
</dbReference>
<dbReference type="PROSITE" id="PS00674">
    <property type="entry name" value="AAA"/>
    <property type="match status" value="1"/>
</dbReference>
<keyword id="KW-0002">3D-structure</keyword>
<keyword id="KW-0067">ATP-binding</keyword>
<keyword id="KW-0967">Endosome</keyword>
<keyword id="KW-0472">Membrane</keyword>
<keyword id="KW-0547">Nucleotide-binding</keyword>
<keyword id="KW-0653">Protein transport</keyword>
<keyword id="KW-1185">Reference proteome</keyword>
<keyword id="KW-0813">Transport</keyword>